<evidence type="ECO:0000255" key="1">
    <source>
        <dbReference type="HAMAP-Rule" id="MF_01310"/>
    </source>
</evidence>
<evidence type="ECO:0000256" key="2">
    <source>
        <dbReference type="SAM" id="MobiDB-lite"/>
    </source>
</evidence>
<evidence type="ECO:0000305" key="3"/>
<keyword id="KW-1185">Reference proteome</keyword>
<keyword id="KW-0687">Ribonucleoprotein</keyword>
<keyword id="KW-0689">Ribosomal protein</keyword>
<keyword id="KW-0694">RNA-binding</keyword>
<keyword id="KW-0699">rRNA-binding</keyword>
<proteinExistence type="inferred from homology"/>
<dbReference type="EMBL" id="AE000782">
    <property type="protein sequence ID" value="AAB88982.1"/>
    <property type="molecule type" value="Genomic_DNA"/>
</dbReference>
<dbReference type="PIR" id="C69535">
    <property type="entry name" value="C69535"/>
</dbReference>
<dbReference type="RefSeq" id="WP_010879772.1">
    <property type="nucleotide sequence ID" value="NC_000917.1"/>
</dbReference>
<dbReference type="SMR" id="O28001"/>
<dbReference type="STRING" id="224325.AF_2283"/>
<dbReference type="PaxDb" id="224325-AF_2283"/>
<dbReference type="EnsemblBacteria" id="AAB88982">
    <property type="protein sequence ID" value="AAB88982"/>
    <property type="gene ID" value="AF_2283"/>
</dbReference>
<dbReference type="KEGG" id="afu:AF_2283"/>
<dbReference type="eggNOG" id="arCOG04240">
    <property type="taxonomic scope" value="Archaea"/>
</dbReference>
<dbReference type="HOGENOM" id="CLU_072439_6_1_2"/>
<dbReference type="PhylomeDB" id="O28001"/>
<dbReference type="Proteomes" id="UP000002199">
    <property type="component" value="Chromosome"/>
</dbReference>
<dbReference type="GO" id="GO:1990904">
    <property type="term" value="C:ribonucleoprotein complex"/>
    <property type="evidence" value="ECO:0007669"/>
    <property type="project" value="UniProtKB-KW"/>
</dbReference>
<dbReference type="GO" id="GO:0005840">
    <property type="term" value="C:ribosome"/>
    <property type="evidence" value="ECO:0007669"/>
    <property type="project" value="UniProtKB-KW"/>
</dbReference>
<dbReference type="GO" id="GO:0019843">
    <property type="term" value="F:rRNA binding"/>
    <property type="evidence" value="ECO:0007669"/>
    <property type="project" value="UniProtKB-UniRule"/>
</dbReference>
<dbReference type="GO" id="GO:0003735">
    <property type="term" value="F:structural constituent of ribosome"/>
    <property type="evidence" value="ECO:0007669"/>
    <property type="project" value="InterPro"/>
</dbReference>
<dbReference type="GO" id="GO:0006412">
    <property type="term" value="P:translation"/>
    <property type="evidence" value="ECO:0007669"/>
    <property type="project" value="UniProtKB-UniRule"/>
</dbReference>
<dbReference type="FunFam" id="3.30.420.80:FF:000007">
    <property type="entry name" value="30S ribosomal protein S11"/>
    <property type="match status" value="1"/>
</dbReference>
<dbReference type="Gene3D" id="3.30.420.80">
    <property type="entry name" value="Ribosomal protein S11"/>
    <property type="match status" value="1"/>
</dbReference>
<dbReference type="HAMAP" id="MF_01310">
    <property type="entry name" value="Ribosomal_uS11"/>
    <property type="match status" value="1"/>
</dbReference>
<dbReference type="InterPro" id="IPR001971">
    <property type="entry name" value="Ribosomal_uS11"/>
</dbReference>
<dbReference type="InterPro" id="IPR019961">
    <property type="entry name" value="Ribosomal_uS11_archaeal"/>
</dbReference>
<dbReference type="InterPro" id="IPR018102">
    <property type="entry name" value="Ribosomal_uS11_CS"/>
</dbReference>
<dbReference type="InterPro" id="IPR036967">
    <property type="entry name" value="Ribosomal_uS11_sf"/>
</dbReference>
<dbReference type="NCBIfam" id="TIGR03628">
    <property type="entry name" value="arch_S11P"/>
    <property type="match status" value="1"/>
</dbReference>
<dbReference type="NCBIfam" id="NF007176">
    <property type="entry name" value="PRK09607.1"/>
    <property type="match status" value="1"/>
</dbReference>
<dbReference type="PANTHER" id="PTHR11759">
    <property type="entry name" value="40S RIBOSOMAL PROTEIN S14/30S RIBOSOMAL PROTEIN S11"/>
    <property type="match status" value="1"/>
</dbReference>
<dbReference type="Pfam" id="PF00411">
    <property type="entry name" value="Ribosomal_S11"/>
    <property type="match status" value="1"/>
</dbReference>
<dbReference type="PIRSF" id="PIRSF002131">
    <property type="entry name" value="Ribosomal_S11"/>
    <property type="match status" value="1"/>
</dbReference>
<dbReference type="SUPFAM" id="SSF53137">
    <property type="entry name" value="Translational machinery components"/>
    <property type="match status" value="1"/>
</dbReference>
<dbReference type="PROSITE" id="PS00054">
    <property type="entry name" value="RIBOSOMAL_S11"/>
    <property type="match status" value="1"/>
</dbReference>
<reference key="1">
    <citation type="journal article" date="1997" name="Nature">
        <title>The complete genome sequence of the hyperthermophilic, sulphate-reducing archaeon Archaeoglobus fulgidus.</title>
        <authorList>
            <person name="Klenk H.-P."/>
            <person name="Clayton R.A."/>
            <person name="Tomb J.-F."/>
            <person name="White O."/>
            <person name="Nelson K.E."/>
            <person name="Ketchum K.A."/>
            <person name="Dodson R.J."/>
            <person name="Gwinn M.L."/>
            <person name="Hickey E.K."/>
            <person name="Peterson J.D."/>
            <person name="Richardson D.L."/>
            <person name="Kerlavage A.R."/>
            <person name="Graham D.E."/>
            <person name="Kyrpides N.C."/>
            <person name="Fleischmann R.D."/>
            <person name="Quackenbush J."/>
            <person name="Lee N.H."/>
            <person name="Sutton G.G."/>
            <person name="Gill S.R."/>
            <person name="Kirkness E.F."/>
            <person name="Dougherty B.A."/>
            <person name="McKenney K."/>
            <person name="Adams M.D."/>
            <person name="Loftus B.J."/>
            <person name="Peterson S.N."/>
            <person name="Reich C.I."/>
            <person name="McNeil L.K."/>
            <person name="Badger J.H."/>
            <person name="Glodek A."/>
            <person name="Zhou L."/>
            <person name="Overbeek R."/>
            <person name="Gocayne J.D."/>
            <person name="Weidman J.F."/>
            <person name="McDonald L.A."/>
            <person name="Utterback T.R."/>
            <person name="Cotton M.D."/>
            <person name="Spriggs T."/>
            <person name="Artiach P."/>
            <person name="Kaine B.P."/>
            <person name="Sykes S.M."/>
            <person name="Sadow P.W."/>
            <person name="D'Andrea K.P."/>
            <person name="Bowman C."/>
            <person name="Fujii C."/>
            <person name="Garland S.A."/>
            <person name="Mason T.M."/>
            <person name="Olsen G.J."/>
            <person name="Fraser C.M."/>
            <person name="Smith H.O."/>
            <person name="Woese C.R."/>
            <person name="Venter J.C."/>
        </authorList>
    </citation>
    <scope>NUCLEOTIDE SEQUENCE [LARGE SCALE GENOMIC DNA]</scope>
    <source>
        <strain>ATCC 49558 / DSM 4304 / JCM 9628 / NBRC 100126 / VC-16</strain>
    </source>
</reference>
<comment type="function">
    <text evidence="1">Located on the platform of the 30S subunit.</text>
</comment>
<comment type="subunit">
    <text evidence="1">Part of the 30S ribosomal subunit.</text>
</comment>
<comment type="similarity">
    <text evidence="1">Belongs to the universal ribosomal protein uS11 family.</text>
</comment>
<sequence>MAEKKKGGRWGIAHIYSSYNNTIITITDITGAEIIARVSGGMIVKADRDEGNPYTAMQAALRAAAIAKEKGIDGVHIKVRAPGGNKHTTPGPGAQAAIRALARAGLKIGRIEDVTPIPHDGTRPPGGKRGRRV</sequence>
<gene>
    <name evidence="1" type="primary">rps11</name>
    <name type="ordered locus">AF_2283</name>
</gene>
<name>RS11_ARCFU</name>
<protein>
    <recommendedName>
        <fullName evidence="1">Small ribosomal subunit protein uS11</fullName>
    </recommendedName>
    <alternativeName>
        <fullName evidence="3">30S ribosomal protein S11</fullName>
    </alternativeName>
</protein>
<accession>O28001</accession>
<feature type="chain" id="PRO_0000123267" description="Small ribosomal subunit protein uS11">
    <location>
        <begin position="1"/>
        <end position="133"/>
    </location>
</feature>
<feature type="region of interest" description="Disordered" evidence="2">
    <location>
        <begin position="114"/>
        <end position="133"/>
    </location>
</feature>
<organism>
    <name type="scientific">Archaeoglobus fulgidus (strain ATCC 49558 / DSM 4304 / JCM 9628 / NBRC 100126 / VC-16)</name>
    <dbReference type="NCBI Taxonomy" id="224325"/>
    <lineage>
        <taxon>Archaea</taxon>
        <taxon>Methanobacteriati</taxon>
        <taxon>Methanobacteriota</taxon>
        <taxon>Archaeoglobi</taxon>
        <taxon>Archaeoglobales</taxon>
        <taxon>Archaeoglobaceae</taxon>
        <taxon>Archaeoglobus</taxon>
    </lineage>
</organism>